<keyword id="KW-0002">3D-structure</keyword>
<keyword id="KW-0342">GTP-binding</keyword>
<keyword id="KW-0945">Host-virus interaction</keyword>
<keyword id="KW-0378">Hydrolase</keyword>
<keyword id="KW-1090">Inhibition of host innate immune response by virus</keyword>
<keyword id="KW-0489">Methyltransferase</keyword>
<keyword id="KW-0506">mRNA capping</keyword>
<keyword id="KW-0507">mRNA processing</keyword>
<keyword id="KW-0511">Multifunctional enzyme</keyword>
<keyword id="KW-0547">Nucleotide-binding</keyword>
<keyword id="KW-0548">Nucleotidyltransferase</keyword>
<keyword id="KW-1185">Reference proteome</keyword>
<keyword id="KW-0694">RNA-binding</keyword>
<keyword id="KW-0949">S-adenosyl-L-methionine</keyword>
<keyword id="KW-0808">Transferase</keyword>
<keyword id="KW-0899">Viral immunoevasion</keyword>
<keyword id="KW-0946">Virion</keyword>
<organismHost>
    <name type="scientific">Chlorocebus pygerythrus</name>
    <name type="common">Vervet monkey</name>
    <name type="synonym">Cercopithecus pygerythrus</name>
    <dbReference type="NCBI Taxonomy" id="60710"/>
</organismHost>
<dbReference type="EC" id="3.1.4.-" evidence="1 3"/>
<dbReference type="EC" id="2.7.7.50" evidence="1 2"/>
<dbReference type="EC" id="2.1.1.56" evidence="1 2"/>
<dbReference type="EMBL" id="DQ838645">
    <property type="protein sequence ID" value="ABG75824.1"/>
    <property type="molecule type" value="Genomic_RNA"/>
</dbReference>
<dbReference type="RefSeq" id="YP_002302228.1">
    <property type="nucleotide sequence ID" value="NC_011508.2"/>
</dbReference>
<dbReference type="PDB" id="5AF2">
    <property type="method" value="X-ray"/>
    <property type="resolution" value="1.39 A"/>
    <property type="chains" value="A/B/C/D=696-835"/>
</dbReference>
<dbReference type="PDBsum" id="5AF2"/>
<dbReference type="SMR" id="A2T3S5"/>
<dbReference type="GeneID" id="7011370"/>
<dbReference type="KEGG" id="vg:7011370"/>
<dbReference type="Proteomes" id="UP000001119">
    <property type="component" value="Genome"/>
</dbReference>
<dbReference type="GO" id="GO:0019013">
    <property type="term" value="C:viral nucleocapsid"/>
    <property type="evidence" value="ECO:0007669"/>
    <property type="project" value="UniProtKB-UniRule"/>
</dbReference>
<dbReference type="GO" id="GO:0005525">
    <property type="term" value="F:GTP binding"/>
    <property type="evidence" value="ECO:0007669"/>
    <property type="project" value="UniProtKB-UniRule"/>
</dbReference>
<dbReference type="GO" id="GO:0004482">
    <property type="term" value="F:mRNA 5'-cap (guanine-N7-)-methyltransferase activity"/>
    <property type="evidence" value="ECO:0007669"/>
    <property type="project" value="UniProtKB-UniRule"/>
</dbReference>
<dbReference type="GO" id="GO:0004484">
    <property type="term" value="F:mRNA guanylyltransferase activity"/>
    <property type="evidence" value="ECO:0007669"/>
    <property type="project" value="UniProtKB-UniRule"/>
</dbReference>
<dbReference type="GO" id="GO:0008081">
    <property type="term" value="F:phosphoric diester hydrolase activity"/>
    <property type="evidence" value="ECO:0000314"/>
    <property type="project" value="UniProtKB"/>
</dbReference>
<dbReference type="GO" id="GO:0003723">
    <property type="term" value="F:RNA binding"/>
    <property type="evidence" value="ECO:0007669"/>
    <property type="project" value="UniProtKB-UniRule"/>
</dbReference>
<dbReference type="GO" id="GO:0106005">
    <property type="term" value="P:RNA 5'-cap (guanine-N7)-methylation"/>
    <property type="evidence" value="ECO:0000314"/>
    <property type="project" value="UniProtKB"/>
</dbReference>
<dbReference type="GO" id="GO:0052170">
    <property type="term" value="P:symbiont-mediated suppression of host innate immune response"/>
    <property type="evidence" value="ECO:0007669"/>
    <property type="project" value="UniProtKB-KW"/>
</dbReference>
<dbReference type="GO" id="GO:0016032">
    <property type="term" value="P:viral process"/>
    <property type="evidence" value="ECO:0007669"/>
    <property type="project" value="UniProtKB-UniRule"/>
</dbReference>
<dbReference type="CDD" id="cd20757">
    <property type="entry name" value="capping_2-OMTase_Rotavirus"/>
    <property type="match status" value="1"/>
</dbReference>
<dbReference type="HAMAP" id="MF_04124">
    <property type="entry name" value="Rota_VP3"/>
    <property type="match status" value="1"/>
</dbReference>
<dbReference type="HAMAP" id="MF_04128">
    <property type="entry name" value="Rota_VP3_A"/>
    <property type="match status" value="1"/>
</dbReference>
<dbReference type="InterPro" id="IPR039573">
    <property type="entry name" value="NS2A-like"/>
</dbReference>
<dbReference type="InterPro" id="IPR011181">
    <property type="entry name" value="VP3_Rotav"/>
</dbReference>
<dbReference type="Pfam" id="PF05213">
    <property type="entry name" value="Corona_NS2A"/>
    <property type="match status" value="1"/>
</dbReference>
<dbReference type="Pfam" id="PF06929">
    <property type="entry name" value="Rotavirus_VP3"/>
    <property type="match status" value="1"/>
</dbReference>
<dbReference type="PIRSF" id="PIRSF004015">
    <property type="entry name" value="LigT_rotavirus"/>
    <property type="match status" value="1"/>
</dbReference>
<dbReference type="PROSITE" id="PS51589">
    <property type="entry name" value="SAM_MT56_VP3"/>
    <property type="match status" value="1"/>
</dbReference>
<organism>
    <name type="scientific">Rotavirus A (isolate RVA/Monkey/South Africa/SA11-H96/1958/G3P5B[2])</name>
    <name type="common">RV-A</name>
    <name type="synonym">Simian Agent 11 (isolate SI/South Africa/H96/58)</name>
    <dbReference type="NCBI Taxonomy" id="450149"/>
    <lineage>
        <taxon>Viruses</taxon>
        <taxon>Riboviria</taxon>
        <taxon>Orthornavirae</taxon>
        <taxon>Duplornaviricota</taxon>
        <taxon>Resentoviricetes</taxon>
        <taxon>Reovirales</taxon>
        <taxon>Sedoreoviridae</taxon>
        <taxon>Rotavirus</taxon>
        <taxon>Rotavirus A</taxon>
    </lineage>
</organism>
<proteinExistence type="evidence at protein level"/>
<sequence>MKVLALRHSVAQVYADTQVYVHDDTKDSYENAFLISNLTTHNILYLNYSIKTLEILNKSGIAAIALQSLEELFTLIRCNFTYDYELDIIYLHDYSYYTNNEIRTDQHWITKTNIEEYLLPGWKLTYVGYNGSETRGHYNFSFKCQNAATDDDLIIEYIYSEALDFQNFMLKKIKERMTTSLPIARLSNRVFRDKLFPSLLKEHKNVVNVGPRNESMFTFLNYPTIKQFSNGAYLVKDTIKLKQERWLGKRISQFDIGQYKNMLNVLTAIYYYYNLYKSKPIIYMIGSAPSYWIYDVRHYSDFFFETWDPLDTPYSSIHHKELFFINDVKKLKDNSILYIDIRTDRGNADWKKWRKTVEEQTINNLDIAYEYLRTGKAKVCCVKMTAMDLELPISAKLLHHPTTEIRSEFYLLLDTWDLTNIRRFIPKGVLYSFINNIITENVFIQQPFKVKVLNDSYIVALYALSNDFNNRSEVIKLINNQKQSLITVRINNTFKDEPKVGFKNIYDWTFLPTDFDTKEAIITSYDGCLGLFGLSISLASKPTGNNHLFILSGTDKYYKLDQFANHTSISRRSHQIRFSESATSYSGYIFRDLSNNNFNLIGTNIENSVSGHVYNALIYYRYNYSFDLKRWIYLHSIDKVDIEGGKYYELAPIELIYACRSAKEFATLQDDLTVLRYSNEIENYINTVYSITYADDPNYFIGIQFRNIPYKYDVKIPHLTFGVLHISDNMVPDVIDILKIMKNELFKMDITTSYTYMLSDGIYVANVSGVLSTYFKIYNVFYKNQITFGQSRMFIPHITLSFNNMRTVRIETTKLQIKSIYLRKIKGDTVFDMVE</sequence>
<name>VP3_ROTSH</name>
<evidence type="ECO:0000255" key="1">
    <source>
        <dbReference type="HAMAP-Rule" id="MF_04128"/>
    </source>
</evidence>
<evidence type="ECO:0000269" key="2">
    <source>
    </source>
</evidence>
<evidence type="ECO:0000269" key="3">
    <source>
    </source>
</evidence>
<evidence type="ECO:0000269" key="4">
    <source>
    </source>
</evidence>
<evidence type="ECO:0000269" key="5">
    <source>
    </source>
</evidence>
<evidence type="ECO:0000269" key="6">
    <source>
    </source>
</evidence>
<evidence type="ECO:0000305" key="7">
    <source>
    </source>
</evidence>
<evidence type="ECO:0000305" key="8">
    <source>
    </source>
</evidence>
<evidence type="ECO:0007829" key="9">
    <source>
        <dbReference type="PDB" id="5AF2"/>
    </source>
</evidence>
<accession>A2T3S5</accession>
<comment type="function">
    <text evidence="1 7">Multifunctional enzyme involved in mRNA capping. Catalyzes the formation of the 5' cap structure on the viral plus-strand transcripts. Specifically binds to GTP and displays guanylyltransferase and methyltransferase activities. Has affinity for ssRNA but not for dsRNA. Capping activity is non-specific and caps RNAs that initiate with either a G or an A residue. Together with VP1 polymerase, forms a VP1-VP3 complex positioned near the channels situated at each of the five-fold vertices of the core. Following infection, the outermost layer of the virus is lost, leaving a double-layered particle (DLP) made up of the core and VP6 shell. VP1 then catalyzes the transcription of fully conservative plus-strand genomic RNAs that are capped by VP3 and extruded through the DLP's channels into the cytoplasm where they function as mRNAs for translation of viral proteins. DLPs probably have an RNA triphosphatase activity as well, whereas open cores do not.</text>
</comment>
<comment type="function">
    <text evidence="1 3">Counteracts the host innate immune response thanks to its phosphodiesterase that degrades the 5'-triphosphorylated, 2'-5' linked adenylate oligomers produced by the host cell IFN-inducible 2',5'-oligoadenylate synthetase (OAS). The host RNaseL is therefore not activated.</text>
</comment>
<comment type="catalytic activity">
    <reaction evidence="1 2">
        <text>a 5'-end diphospho-ribonucleoside in mRNA + GTP + H(+) = a 5'-end (5'-triphosphoguanosine)-ribonucleoside in mRNA + diphosphate</text>
        <dbReference type="Rhea" id="RHEA:67012"/>
        <dbReference type="Rhea" id="RHEA-COMP:17165"/>
        <dbReference type="Rhea" id="RHEA-COMP:17166"/>
        <dbReference type="ChEBI" id="CHEBI:15378"/>
        <dbReference type="ChEBI" id="CHEBI:33019"/>
        <dbReference type="ChEBI" id="CHEBI:37565"/>
        <dbReference type="ChEBI" id="CHEBI:167616"/>
        <dbReference type="ChEBI" id="CHEBI:167617"/>
        <dbReference type="EC" id="2.7.7.50"/>
    </reaction>
</comment>
<comment type="catalytic activity">
    <reaction evidence="1 2">
        <text>a 5'-end (5'-triphosphoguanosine)-ribonucleoside in mRNA + S-adenosyl-L-methionine = a 5'-end (N(7)-methyl 5'-triphosphoguanosine)-ribonucleoside in mRNA + S-adenosyl-L-homocysteine</text>
        <dbReference type="Rhea" id="RHEA:67008"/>
        <dbReference type="Rhea" id="RHEA-COMP:17166"/>
        <dbReference type="Rhea" id="RHEA-COMP:17167"/>
        <dbReference type="ChEBI" id="CHEBI:57856"/>
        <dbReference type="ChEBI" id="CHEBI:59789"/>
        <dbReference type="ChEBI" id="CHEBI:156461"/>
        <dbReference type="ChEBI" id="CHEBI:167617"/>
        <dbReference type="EC" id="2.1.1.56"/>
    </reaction>
</comment>
<comment type="catalytic activity">
    <reaction evidence="1 3">
        <text>5'-triphosphoadenylyl-(2'-&gt;5')-adenylyl-(2'-&gt;5')-adenosine + 2 H2O = 2 AMP + ATP + 2 H(+)</text>
        <dbReference type="Rhea" id="RHEA:45964"/>
        <dbReference type="ChEBI" id="CHEBI:15377"/>
        <dbReference type="ChEBI" id="CHEBI:15378"/>
        <dbReference type="ChEBI" id="CHEBI:30616"/>
        <dbReference type="ChEBI" id="CHEBI:67143"/>
        <dbReference type="ChEBI" id="CHEBI:456215"/>
    </reaction>
</comment>
<comment type="subunit">
    <text evidence="1 6">Interacts with VP1 (By similarity). Interacts with VP2 (PubMed:9420216).</text>
</comment>
<comment type="subcellular location">
    <subcellularLocation>
        <location evidence="1">Virion</location>
    </subcellularLocation>
    <text evidence="1">Attached inside the inner capsid as a minor component. There are about 11 to 12 copies per virion.</text>
</comment>
<comment type="domain">
    <text evidence="1 3 4 5">Contains a bipartite N7-methyltransferase domain, a 2'-O-methyltransferase domain and a GTase/RTPase domain. The C-terminus contains a phosphodiesterase domain that degrades the 5'-triphosphorylated, 2'-5' linked adenylate oligomers produced by the host cell in response to IFN stimulation.</text>
</comment>
<comment type="similarity">
    <text evidence="1">Belongs to the rotavirus VP3 family.</text>
</comment>
<reference key="1">
    <citation type="journal article" date="2007" name="Virology">
        <title>Genome heterogeneity of SA11 rotavirus due to reassortment with 'O' agent.</title>
        <authorList>
            <person name="Small C."/>
            <person name="Barro M."/>
            <person name="Brown T.L."/>
            <person name="Patton J.T."/>
        </authorList>
    </citation>
    <scope>NUCLEOTIDE SEQUENCE [GENOMIC RNA]</scope>
</reference>
<reference key="2">
    <citation type="journal article" date="1998" name="J. Virol.">
        <title>The N terminus of rotavirus VP2 is necessary for encapsidation of VP1 and VP3.</title>
        <authorList>
            <person name="Zeng C.Q.-Y."/>
            <person name="Estes M.K."/>
            <person name="Charpilienne A."/>
            <person name="Cohen J."/>
        </authorList>
    </citation>
    <scope>INTERACTION WITH VP2</scope>
</reference>
<reference key="3">
    <citation type="journal article" date="1999" name="Virology">
        <title>Rotavirus open cores catalyze 5'-capping and methylation of exogenous RNA: evidence that VP3 is a methyltransferase.</title>
        <authorList>
            <person name="Chen D."/>
            <person name="Luongo C.L."/>
            <person name="Nibert M.L."/>
            <person name="Patton J.T."/>
        </authorList>
    </citation>
    <scope>FUNCTION</scope>
    <scope>CATALYTIC ACTIVITY</scope>
</reference>
<reference key="4">
    <citation type="journal article" date="2013" name="Proc. Natl. Acad. Sci. U.S.A.">
        <title>Homologous 2',5'-phosphodiesterases from disparate RNA viruses antagonize antiviral innate immunity.</title>
        <authorList>
            <person name="Zhang R."/>
            <person name="Jha B.K."/>
            <person name="Ogden K.M."/>
            <person name="Dong B."/>
            <person name="Zhao L."/>
            <person name="Elliott R."/>
            <person name="Patton J.T."/>
            <person name="Silverman R.H."/>
            <person name="Weiss S.R."/>
        </authorList>
    </citation>
    <scope>FUNCTION</scope>
    <scope>DOMAIN</scope>
    <scope>CATALYTIC ACTIVITY</scope>
    <scope>MUTAGENESIS OF HIS-718 AND HIS-797</scope>
    <scope>ACTIVE SITE</scope>
</reference>
<reference key="5">
    <citation type="journal article" date="2014" name="J. Virol.">
        <title>Predicted structure and domain organization of rotavirus capping enzyme and innate immune antagonist VP3.</title>
        <authorList>
            <person name="Ogden K.M."/>
            <person name="Snyder M.J."/>
            <person name="Dennis A.F."/>
            <person name="Patton J.T."/>
        </authorList>
    </citation>
    <scope>DOMAIN</scope>
</reference>
<reference key="6">
    <citation type="journal article" date="2015" name="Proteins">
        <title>Crystal structure of the C-terminal 2',5'-phosphodiesterase domain of group A rotavirus protein VP3.</title>
        <authorList>
            <person name="Brandmann T."/>
            <person name="Jinek M."/>
        </authorList>
    </citation>
    <scope>X-RAY CRYSTALLOGRAPHY (1.39 ANGSTROMS) OF 696-835</scope>
    <scope>DOMAIN</scope>
</reference>
<protein>
    <recommendedName>
        <fullName evidence="1">Protein VP3</fullName>
    </recommendedName>
    <domain>
        <recommendedName>
            <fullName evidence="1">2',5'-phosphodiesterase</fullName>
            <ecNumber evidence="1 3">3.1.4.-</ecNumber>
        </recommendedName>
    </domain>
    <domain>
        <recommendedName>
            <fullName evidence="1">mRNA guanylyltransferase</fullName>
            <ecNumber evidence="1 2">2.7.7.50</ecNumber>
        </recommendedName>
    </domain>
    <domain>
        <recommendedName>
            <fullName evidence="1">mRNA (guanine-N(7))-methyltransferase</fullName>
            <ecNumber evidence="1 2">2.1.1.56</ecNumber>
        </recommendedName>
    </domain>
</protein>
<feature type="chain" id="PRO_0000367814" description="Protein VP3">
    <location>
        <begin position="1"/>
        <end position="835"/>
    </location>
</feature>
<feature type="region of interest" description="N7-methyltransferase activity" evidence="1 4">
    <location>
        <begin position="171"/>
        <end position="245"/>
    </location>
</feature>
<feature type="region of interest" description="2'-O-methyltransferase activity" evidence="1 4">
    <location>
        <begin position="246"/>
        <end position="428"/>
    </location>
</feature>
<feature type="region of interest" description="N7-methyltransferase activity" evidence="1 4">
    <location>
        <begin position="429"/>
        <end position="555"/>
    </location>
</feature>
<feature type="region of interest" description="GTase/RTPase activity" evidence="1 4">
    <location>
        <begin position="556"/>
        <end position="693"/>
    </location>
</feature>
<feature type="region of interest" description="2'-5'-phosphodiesterase activity" evidence="1 3">
    <location>
        <begin position="693"/>
        <end position="835"/>
    </location>
</feature>
<feature type="active site" description="For 2'-5'-phosphodiesterase activity" evidence="1 3 8">
    <location>
        <position position="718"/>
    </location>
</feature>
<feature type="active site" description="For 2'-5'-phosphodiesterase activity" evidence="1 8">
    <location>
        <position position="720"/>
    </location>
</feature>
<feature type="active site" description="For 2'-5'-phosphodiesterase activity" evidence="1 3 8">
    <location>
        <position position="797"/>
    </location>
</feature>
<feature type="active site" description="For 2'-5'-phosphodiesterase activity" evidence="1 8">
    <location>
        <position position="799"/>
    </location>
</feature>
<feature type="mutagenesis site" description="Complete loss of 2'-5'-phosphodiesterase activity; when associated with A-797." evidence="3">
    <original>H</original>
    <variation>A</variation>
    <location>
        <position position="718"/>
    </location>
</feature>
<feature type="mutagenesis site" description="Complete loss of 2'-5'-phosphodiesterase activity; when associated with A-718." evidence="3">
    <original>H</original>
    <variation>A</variation>
    <location>
        <position position="797"/>
    </location>
</feature>
<feature type="strand" evidence="9">
    <location>
        <begin position="699"/>
        <end position="706"/>
    </location>
</feature>
<feature type="strand" evidence="9">
    <location>
        <begin position="714"/>
        <end position="716"/>
    </location>
</feature>
<feature type="strand" evidence="9">
    <location>
        <begin position="718"/>
        <end position="725"/>
    </location>
</feature>
<feature type="helix" evidence="9">
    <location>
        <begin position="728"/>
        <end position="730"/>
    </location>
</feature>
<feature type="helix" evidence="9">
    <location>
        <begin position="731"/>
        <end position="740"/>
    </location>
</feature>
<feature type="helix" evidence="9">
    <location>
        <begin position="742"/>
        <end position="746"/>
    </location>
</feature>
<feature type="strand" evidence="9">
    <location>
        <begin position="751"/>
        <end position="759"/>
    </location>
</feature>
<feature type="strand" evidence="9">
    <location>
        <begin position="762"/>
        <end position="766"/>
    </location>
</feature>
<feature type="helix" evidence="9">
    <location>
        <begin position="771"/>
        <end position="783"/>
    </location>
</feature>
<feature type="strand" evidence="9">
    <location>
        <begin position="787"/>
        <end position="792"/>
    </location>
</feature>
<feature type="strand" evidence="9">
    <location>
        <begin position="797"/>
        <end position="803"/>
    </location>
</feature>
<feature type="strand" evidence="9">
    <location>
        <begin position="809"/>
        <end position="814"/>
    </location>
</feature>
<feature type="strand" evidence="9">
    <location>
        <begin position="817"/>
        <end position="824"/>
    </location>
</feature>
<feature type="strand" evidence="9">
    <location>
        <begin position="829"/>
        <end position="833"/>
    </location>
</feature>